<sequence length="400" mass="41709">MRSLIAMYQRIGLVPLIIIGLVLGVLIGWLAPNVGIALGLLGTLFVGALKAVAPILVFVLVMAAISQHRSGNEVYVKPVLIMYMFGTFLAALTAVGASFLFPTELVLVNAVIEQVPPANLKEVLTNLLMNLVANPVQAIAEANYIGILAWAIIIGFALRQASDTARTVVGDFSDAISQVVKWVIALAPFGILGLVANTVAETGFEALAGYARILMVLVGCMLFIALVVNPLIILVKTGKNPYPLVFICLRESGITAFFTRSSAANIPVNMNLARKLGLHEDTYSVTIPLGATINMAGAAITINVLTLAAAHTLGIEVTFASALLLSLVATISACGASGVAGGSLLLIPLAASLFSIPNDIAMQVVAIGFIIGVIQDSAETALNSSTDVLFTAAADPKYAR</sequence>
<reference key="1">
    <citation type="submission" date="2006-03" db="EMBL/GenBank/DDBJ databases">
        <title>Complete sequence of chromosome of Psychrobacter cryohalolentis K5.</title>
        <authorList>
            <consortium name="US DOE Joint Genome Institute"/>
            <person name="Copeland A."/>
            <person name="Lucas S."/>
            <person name="Lapidus A."/>
            <person name="Barry K."/>
            <person name="Detter J.C."/>
            <person name="Glavina T."/>
            <person name="Hammon N."/>
            <person name="Israni S."/>
            <person name="Dalin E."/>
            <person name="Tice H."/>
            <person name="Pitluck S."/>
            <person name="Brettin T."/>
            <person name="Bruce D."/>
            <person name="Han C."/>
            <person name="Tapia R."/>
            <person name="Sims D.R."/>
            <person name="Gilna P."/>
            <person name="Schmutz J."/>
            <person name="Larimer F."/>
            <person name="Land M."/>
            <person name="Hauser L."/>
            <person name="Kyrpides N."/>
            <person name="Kim E."/>
            <person name="Richardson P."/>
        </authorList>
    </citation>
    <scope>NUCLEOTIDE SEQUENCE [LARGE SCALE GENOMIC DNA]</scope>
    <source>
        <strain>ATCC BAA-1226 / DSM 17306 / VKM B-2378 / K5</strain>
    </source>
</reference>
<protein>
    <recommendedName>
        <fullName evidence="1">Serine/threonine transporter SstT</fullName>
    </recommendedName>
    <alternativeName>
        <fullName evidence="1">Na(+)/serine-threonine symporter</fullName>
    </alternativeName>
</protein>
<name>SSTT_PSYCK</name>
<comment type="function">
    <text evidence="1">Involved in the import of serine and threonine into the cell, with the concomitant import of sodium (symport system).</text>
</comment>
<comment type="catalytic activity">
    <reaction evidence="1">
        <text>L-serine(in) + Na(+)(in) = L-serine(out) + Na(+)(out)</text>
        <dbReference type="Rhea" id="RHEA:29575"/>
        <dbReference type="ChEBI" id="CHEBI:29101"/>
        <dbReference type="ChEBI" id="CHEBI:33384"/>
    </reaction>
    <physiologicalReaction direction="right-to-left" evidence="1">
        <dbReference type="Rhea" id="RHEA:29577"/>
    </physiologicalReaction>
</comment>
<comment type="catalytic activity">
    <reaction evidence="1">
        <text>L-threonine(in) + Na(+)(in) = L-threonine(out) + Na(+)(out)</text>
        <dbReference type="Rhea" id="RHEA:69999"/>
        <dbReference type="ChEBI" id="CHEBI:29101"/>
        <dbReference type="ChEBI" id="CHEBI:57926"/>
    </reaction>
    <physiologicalReaction direction="right-to-left" evidence="1">
        <dbReference type="Rhea" id="RHEA:70001"/>
    </physiologicalReaction>
</comment>
<comment type="subcellular location">
    <subcellularLocation>
        <location evidence="1">Cell inner membrane</location>
        <topology evidence="1">Multi-pass membrane protein</topology>
    </subcellularLocation>
</comment>
<comment type="similarity">
    <text evidence="1">Belongs to the dicarboxylate/amino acid:cation symporter (DAACS) (TC 2.A.23) family.</text>
</comment>
<organism>
    <name type="scientific">Psychrobacter cryohalolentis (strain ATCC BAA-1226 / DSM 17306 / VKM B-2378 / K5)</name>
    <dbReference type="NCBI Taxonomy" id="335284"/>
    <lineage>
        <taxon>Bacteria</taxon>
        <taxon>Pseudomonadati</taxon>
        <taxon>Pseudomonadota</taxon>
        <taxon>Gammaproteobacteria</taxon>
        <taxon>Moraxellales</taxon>
        <taxon>Moraxellaceae</taxon>
        <taxon>Psychrobacter</taxon>
    </lineage>
</organism>
<evidence type="ECO:0000255" key="1">
    <source>
        <dbReference type="HAMAP-Rule" id="MF_01582"/>
    </source>
</evidence>
<gene>
    <name evidence="1" type="primary">sstT</name>
    <name type="ordered locus">Pcryo_0049</name>
</gene>
<feature type="chain" id="PRO_0000309114" description="Serine/threonine transporter SstT">
    <location>
        <begin position="1"/>
        <end position="400"/>
    </location>
</feature>
<feature type="transmembrane region" description="Helical" evidence="1">
    <location>
        <begin position="11"/>
        <end position="31"/>
    </location>
</feature>
<feature type="transmembrane region" description="Helical" evidence="1">
    <location>
        <begin position="45"/>
        <end position="65"/>
    </location>
</feature>
<feature type="transmembrane region" description="Helical" evidence="1">
    <location>
        <begin position="81"/>
        <end position="101"/>
    </location>
</feature>
<feature type="transmembrane region" description="Helical" evidence="1">
    <location>
        <begin position="138"/>
        <end position="158"/>
    </location>
</feature>
<feature type="transmembrane region" description="Helical" evidence="1">
    <location>
        <begin position="175"/>
        <end position="195"/>
    </location>
</feature>
<feature type="transmembrane region" description="Helical" evidence="1">
    <location>
        <begin position="213"/>
        <end position="233"/>
    </location>
</feature>
<feature type="transmembrane region" description="Helical" evidence="1">
    <location>
        <begin position="242"/>
        <end position="264"/>
    </location>
</feature>
<feature type="transmembrane region" description="Helical" evidence="1">
    <location>
        <begin position="295"/>
        <end position="315"/>
    </location>
</feature>
<feature type="transmembrane region" description="Helical" evidence="1">
    <location>
        <begin position="327"/>
        <end position="347"/>
    </location>
</feature>
<feature type="transmembrane region" description="Helical" evidence="1">
    <location>
        <begin position="354"/>
        <end position="374"/>
    </location>
</feature>
<proteinExistence type="inferred from homology"/>
<dbReference type="EMBL" id="CP000323">
    <property type="protein sequence ID" value="ABE73833.1"/>
    <property type="molecule type" value="Genomic_DNA"/>
</dbReference>
<dbReference type="RefSeq" id="WP_011512424.1">
    <property type="nucleotide sequence ID" value="NC_007969.1"/>
</dbReference>
<dbReference type="SMR" id="Q1QES0"/>
<dbReference type="STRING" id="335284.Pcryo_0049"/>
<dbReference type="KEGG" id="pcr:Pcryo_0049"/>
<dbReference type="eggNOG" id="COG3633">
    <property type="taxonomic scope" value="Bacteria"/>
</dbReference>
<dbReference type="HOGENOM" id="CLU_044581_0_0_6"/>
<dbReference type="Proteomes" id="UP000002425">
    <property type="component" value="Chromosome"/>
</dbReference>
<dbReference type="GO" id="GO:0005886">
    <property type="term" value="C:plasma membrane"/>
    <property type="evidence" value="ECO:0007669"/>
    <property type="project" value="UniProtKB-SubCell"/>
</dbReference>
<dbReference type="GO" id="GO:0005295">
    <property type="term" value="F:neutral L-amino acid:sodium symporter activity"/>
    <property type="evidence" value="ECO:0007669"/>
    <property type="project" value="TreeGrafter"/>
</dbReference>
<dbReference type="GO" id="GO:0032329">
    <property type="term" value="P:serine transport"/>
    <property type="evidence" value="ECO:0007669"/>
    <property type="project" value="InterPro"/>
</dbReference>
<dbReference type="GO" id="GO:0015826">
    <property type="term" value="P:threonine transport"/>
    <property type="evidence" value="ECO:0007669"/>
    <property type="project" value="InterPro"/>
</dbReference>
<dbReference type="FunFam" id="1.10.3860.10:FF:000003">
    <property type="entry name" value="Serine/threonine transporter sstT"/>
    <property type="match status" value="1"/>
</dbReference>
<dbReference type="Gene3D" id="1.10.3860.10">
    <property type="entry name" value="Sodium:dicarboxylate symporter"/>
    <property type="match status" value="1"/>
</dbReference>
<dbReference type="HAMAP" id="MF_01582">
    <property type="entry name" value="Ser_Thr_transp_SstT"/>
    <property type="match status" value="1"/>
</dbReference>
<dbReference type="InterPro" id="IPR001991">
    <property type="entry name" value="Na-dicarboxylate_symporter"/>
</dbReference>
<dbReference type="InterPro" id="IPR036458">
    <property type="entry name" value="Na:dicarbo_symporter_sf"/>
</dbReference>
<dbReference type="InterPro" id="IPR023025">
    <property type="entry name" value="Ser_Thr_transp_SstT"/>
</dbReference>
<dbReference type="NCBIfam" id="NF010151">
    <property type="entry name" value="PRK13628.1"/>
    <property type="match status" value="1"/>
</dbReference>
<dbReference type="PANTHER" id="PTHR42865">
    <property type="entry name" value="PROTON/GLUTAMATE-ASPARTATE SYMPORTER"/>
    <property type="match status" value="1"/>
</dbReference>
<dbReference type="PANTHER" id="PTHR42865:SF8">
    <property type="entry name" value="SERINE_THREONINE TRANSPORTER SSTT"/>
    <property type="match status" value="1"/>
</dbReference>
<dbReference type="Pfam" id="PF00375">
    <property type="entry name" value="SDF"/>
    <property type="match status" value="1"/>
</dbReference>
<dbReference type="PRINTS" id="PR00173">
    <property type="entry name" value="EDTRNSPORT"/>
</dbReference>
<dbReference type="SUPFAM" id="SSF118215">
    <property type="entry name" value="Proton glutamate symport protein"/>
    <property type="match status" value="1"/>
</dbReference>
<keyword id="KW-0029">Amino-acid transport</keyword>
<keyword id="KW-0997">Cell inner membrane</keyword>
<keyword id="KW-1003">Cell membrane</keyword>
<keyword id="KW-0472">Membrane</keyword>
<keyword id="KW-0769">Symport</keyword>
<keyword id="KW-0812">Transmembrane</keyword>
<keyword id="KW-1133">Transmembrane helix</keyword>
<keyword id="KW-0813">Transport</keyword>
<accession>Q1QES0</accession>